<accession>O43365</accession>
<accession>A4D181</accession>
<gene>
    <name type="primary">HOXA3</name>
    <name type="synonym">HOX1E</name>
</gene>
<feature type="chain" id="PRO_0000200043" description="Homeobox protein Hox-A3">
    <location>
        <begin position="1"/>
        <end position="443"/>
    </location>
</feature>
<feature type="DNA-binding region" description="Homeobox" evidence="1">
    <location>
        <begin position="191"/>
        <end position="250"/>
    </location>
</feature>
<feature type="region of interest" description="Disordered" evidence="2">
    <location>
        <begin position="75"/>
        <end position="147"/>
    </location>
</feature>
<feature type="region of interest" description="Disordered" evidence="2">
    <location>
        <begin position="159"/>
        <end position="196"/>
    </location>
</feature>
<feature type="region of interest" description="Disordered" evidence="2">
    <location>
        <begin position="247"/>
        <end position="338"/>
    </location>
</feature>
<feature type="region of interest" description="Disordered" evidence="2">
    <location>
        <begin position="400"/>
        <end position="443"/>
    </location>
</feature>
<feature type="short sequence motif" description="Antp-type hexapeptide">
    <location>
        <begin position="155"/>
        <end position="160"/>
    </location>
</feature>
<feature type="compositionally biased region" description="Pro residues" evidence="2">
    <location>
        <begin position="79"/>
        <end position="125"/>
    </location>
</feature>
<feature type="compositionally biased region" description="Low complexity" evidence="2">
    <location>
        <begin position="126"/>
        <end position="141"/>
    </location>
</feature>
<feature type="compositionally biased region" description="Polar residues" evidence="2">
    <location>
        <begin position="187"/>
        <end position="196"/>
    </location>
</feature>
<feature type="compositionally biased region" description="Polar residues" evidence="2">
    <location>
        <begin position="256"/>
        <end position="266"/>
    </location>
</feature>
<feature type="compositionally biased region" description="Low complexity" evidence="2">
    <location>
        <begin position="308"/>
        <end position="318"/>
    </location>
</feature>
<feature type="sequence variant" id="VAR_036264" description="In a breast cancer sample; somatic mutation; dbSNP:rs764656757." evidence="3">
    <original>D</original>
    <variation>N</variation>
    <location>
        <position position="42"/>
    </location>
</feature>
<feature type="sequence variant" id="VAR_036265" description="In a breast cancer sample; somatic mutation." evidence="3">
    <original>A</original>
    <variation>T</variation>
    <location>
        <position position="131"/>
    </location>
</feature>
<evidence type="ECO:0000255" key="1">
    <source>
        <dbReference type="PROSITE-ProRule" id="PRU00108"/>
    </source>
</evidence>
<evidence type="ECO:0000256" key="2">
    <source>
        <dbReference type="SAM" id="MobiDB-lite"/>
    </source>
</evidence>
<evidence type="ECO:0000269" key="3">
    <source>
    </source>
</evidence>
<evidence type="ECO:0000305" key="4"/>
<organism>
    <name type="scientific">Homo sapiens</name>
    <name type="common">Human</name>
    <dbReference type="NCBI Taxonomy" id="9606"/>
    <lineage>
        <taxon>Eukaryota</taxon>
        <taxon>Metazoa</taxon>
        <taxon>Chordata</taxon>
        <taxon>Craniata</taxon>
        <taxon>Vertebrata</taxon>
        <taxon>Euteleostomi</taxon>
        <taxon>Mammalia</taxon>
        <taxon>Eutheria</taxon>
        <taxon>Euarchontoglires</taxon>
        <taxon>Primates</taxon>
        <taxon>Haplorrhini</taxon>
        <taxon>Catarrhini</taxon>
        <taxon>Hominidae</taxon>
        <taxon>Homo</taxon>
    </lineage>
</organism>
<dbReference type="EMBL" id="AC004079">
    <property type="protein sequence ID" value="AAS00376.1"/>
    <property type="molecule type" value="Genomic_DNA"/>
</dbReference>
<dbReference type="EMBL" id="CH236948">
    <property type="protein sequence ID" value="EAL24225.1"/>
    <property type="molecule type" value="Genomic_DNA"/>
</dbReference>
<dbReference type="EMBL" id="CH471073">
    <property type="protein sequence ID" value="EAW93865.1"/>
    <property type="molecule type" value="Genomic_DNA"/>
</dbReference>
<dbReference type="EMBL" id="BC015180">
    <property type="protein sequence ID" value="AAH15180.1"/>
    <property type="molecule type" value="mRNA"/>
</dbReference>
<dbReference type="CCDS" id="CCDS5404.1"/>
<dbReference type="RefSeq" id="NP_001371264.1">
    <property type="nucleotide sequence ID" value="NM_001384335.1"/>
</dbReference>
<dbReference type="RefSeq" id="NP_001371265.1">
    <property type="nucleotide sequence ID" value="NM_001384336.1"/>
</dbReference>
<dbReference type="RefSeq" id="NP_001371266.1">
    <property type="nucleotide sequence ID" value="NM_001384337.1"/>
</dbReference>
<dbReference type="RefSeq" id="NP_001371267.1">
    <property type="nucleotide sequence ID" value="NM_001384338.1"/>
</dbReference>
<dbReference type="RefSeq" id="NP_001371268.1">
    <property type="nucleotide sequence ID" value="NM_001384339.1"/>
</dbReference>
<dbReference type="RefSeq" id="NP_001371269.1">
    <property type="nucleotide sequence ID" value="NM_001384340.1"/>
</dbReference>
<dbReference type="RefSeq" id="NP_001371270.1">
    <property type="nucleotide sequence ID" value="NM_001384341.1"/>
</dbReference>
<dbReference type="RefSeq" id="NP_001371271.1">
    <property type="nucleotide sequence ID" value="NM_001384342.1"/>
</dbReference>
<dbReference type="RefSeq" id="NP_001371272.1">
    <property type="nucleotide sequence ID" value="NM_001384343.1"/>
</dbReference>
<dbReference type="RefSeq" id="NP_001371273.1">
    <property type="nucleotide sequence ID" value="NM_001384344.1"/>
</dbReference>
<dbReference type="RefSeq" id="NP_001371274.1">
    <property type="nucleotide sequence ID" value="NM_001384345.1"/>
</dbReference>
<dbReference type="RefSeq" id="NP_001371275.1">
    <property type="nucleotide sequence ID" value="NM_001384346.1"/>
</dbReference>
<dbReference type="RefSeq" id="NP_109377.1">
    <property type="nucleotide sequence ID" value="NM_030661.5"/>
</dbReference>
<dbReference type="RefSeq" id="NP_705895.1">
    <property type="nucleotide sequence ID" value="NM_153631.3"/>
</dbReference>
<dbReference type="RefSeq" id="XP_005249787.1">
    <property type="nucleotide sequence ID" value="XM_005249730.2"/>
</dbReference>
<dbReference type="RefSeq" id="XP_005249788.1">
    <property type="nucleotide sequence ID" value="XM_005249731.2"/>
</dbReference>
<dbReference type="RefSeq" id="XP_005249789.1">
    <property type="nucleotide sequence ID" value="XM_005249732.3"/>
</dbReference>
<dbReference type="RefSeq" id="XP_006715778.1">
    <property type="nucleotide sequence ID" value="XM_006715715.2"/>
</dbReference>
<dbReference type="RefSeq" id="XP_011513645.1">
    <property type="nucleotide sequence ID" value="XM_011515343.2"/>
</dbReference>
<dbReference type="SMR" id="O43365"/>
<dbReference type="BioGRID" id="109440">
    <property type="interactions" value="13"/>
</dbReference>
<dbReference type="FunCoup" id="O43365">
    <property type="interactions" value="2309"/>
</dbReference>
<dbReference type="IntAct" id="O43365">
    <property type="interactions" value="12"/>
</dbReference>
<dbReference type="MINT" id="O43365"/>
<dbReference type="STRING" id="9606.ENSP00000484411"/>
<dbReference type="GlyGen" id="O43365">
    <property type="glycosylation" value="4 sites, 1 O-linked glycan (2 sites)"/>
</dbReference>
<dbReference type="iPTMnet" id="O43365"/>
<dbReference type="PhosphoSitePlus" id="O43365"/>
<dbReference type="BioMuta" id="HOXA3"/>
<dbReference type="jPOST" id="O43365"/>
<dbReference type="MassIVE" id="O43365"/>
<dbReference type="PaxDb" id="9606-ENSP00000484411"/>
<dbReference type="PeptideAtlas" id="O43365"/>
<dbReference type="ProteomicsDB" id="48912"/>
<dbReference type="Antibodypedia" id="12366">
    <property type="antibodies" value="205 antibodies from 23 providers"/>
</dbReference>
<dbReference type="DNASU" id="3200"/>
<dbReference type="Ensembl" id="ENST00000317201.7">
    <property type="protein sequence ID" value="ENSP00000324884.2"/>
    <property type="gene ID" value="ENSG00000105997.23"/>
</dbReference>
<dbReference type="Ensembl" id="ENST00000396352.8">
    <property type="protein sequence ID" value="ENSP00000379640.3"/>
    <property type="gene ID" value="ENSG00000105997.23"/>
</dbReference>
<dbReference type="Ensembl" id="ENST00000612286.5">
    <property type="protein sequence ID" value="ENSP00000484411.1"/>
    <property type="gene ID" value="ENSG00000105997.23"/>
</dbReference>
<dbReference type="GeneID" id="3200"/>
<dbReference type="KEGG" id="hsa:3200"/>
<dbReference type="MANE-Select" id="ENST00000612286.5">
    <property type="protein sequence ID" value="ENSP00000484411.1"/>
    <property type="RefSeq nucleotide sequence ID" value="NM_153631.3"/>
    <property type="RefSeq protein sequence ID" value="NP_705895.1"/>
</dbReference>
<dbReference type="UCSC" id="uc003syk.3">
    <property type="organism name" value="human"/>
</dbReference>
<dbReference type="AGR" id="HGNC:5104"/>
<dbReference type="CTD" id="3200"/>
<dbReference type="DisGeNET" id="3200"/>
<dbReference type="GeneCards" id="HOXA3"/>
<dbReference type="HGNC" id="HGNC:5104">
    <property type="gene designation" value="HOXA3"/>
</dbReference>
<dbReference type="HPA" id="ENSG00000105997">
    <property type="expression patterns" value="Low tissue specificity"/>
</dbReference>
<dbReference type="MalaCards" id="HOXA3"/>
<dbReference type="MIM" id="142954">
    <property type="type" value="gene"/>
</dbReference>
<dbReference type="neXtProt" id="NX_O43365"/>
<dbReference type="OpenTargets" id="ENSG00000105997"/>
<dbReference type="PharmGKB" id="PA29381"/>
<dbReference type="VEuPathDB" id="HostDB:ENSG00000105997"/>
<dbReference type="eggNOG" id="KOG0489">
    <property type="taxonomic scope" value="Eukaryota"/>
</dbReference>
<dbReference type="GeneTree" id="ENSGT00940000159522"/>
<dbReference type="HOGENOM" id="CLU_051508_1_0_1"/>
<dbReference type="InParanoid" id="O43365"/>
<dbReference type="OMA" id="PDYDPHP"/>
<dbReference type="OrthoDB" id="6159439at2759"/>
<dbReference type="PAN-GO" id="O43365">
    <property type="GO annotations" value="6 GO annotations based on evolutionary models"/>
</dbReference>
<dbReference type="PhylomeDB" id="O43365"/>
<dbReference type="TreeFam" id="TF315938"/>
<dbReference type="PathwayCommons" id="O43365"/>
<dbReference type="Reactome" id="R-HSA-5617472">
    <property type="pathway name" value="Activation of anterior HOX genes in hindbrain development during early embryogenesis"/>
</dbReference>
<dbReference type="SignaLink" id="O43365"/>
<dbReference type="BioGRID-ORCS" id="3200">
    <property type="hits" value="14 hits in 1172 CRISPR screens"/>
</dbReference>
<dbReference type="ChiTaRS" id="HOXA3">
    <property type="organism name" value="human"/>
</dbReference>
<dbReference type="GeneWiki" id="HOXA3"/>
<dbReference type="GenomeRNAi" id="3200"/>
<dbReference type="Pharos" id="O43365">
    <property type="development level" value="Tbio"/>
</dbReference>
<dbReference type="PRO" id="PR:O43365"/>
<dbReference type="Proteomes" id="UP000005640">
    <property type="component" value="Chromosome 7"/>
</dbReference>
<dbReference type="RNAct" id="O43365">
    <property type="molecule type" value="protein"/>
</dbReference>
<dbReference type="Bgee" id="ENSG00000105997">
    <property type="expression patterns" value="Expressed in caput epididymis and 147 other cell types or tissues"/>
</dbReference>
<dbReference type="ExpressionAtlas" id="O43365">
    <property type="expression patterns" value="baseline and differential"/>
</dbReference>
<dbReference type="GO" id="GO:0000785">
    <property type="term" value="C:chromatin"/>
    <property type="evidence" value="ECO:0000247"/>
    <property type="project" value="NTNU_SB"/>
</dbReference>
<dbReference type="GO" id="GO:0005654">
    <property type="term" value="C:nucleoplasm"/>
    <property type="evidence" value="ECO:0000314"/>
    <property type="project" value="HPA"/>
</dbReference>
<dbReference type="GO" id="GO:0005634">
    <property type="term" value="C:nucleus"/>
    <property type="evidence" value="ECO:0000318"/>
    <property type="project" value="GO_Central"/>
</dbReference>
<dbReference type="GO" id="GO:0000981">
    <property type="term" value="F:DNA-binding transcription factor activity, RNA polymerase II-specific"/>
    <property type="evidence" value="ECO:0000247"/>
    <property type="project" value="NTNU_SB"/>
</dbReference>
<dbReference type="GO" id="GO:0071837">
    <property type="term" value="F:HMG box domain binding"/>
    <property type="evidence" value="ECO:0007669"/>
    <property type="project" value="Ensembl"/>
</dbReference>
<dbReference type="GO" id="GO:0000978">
    <property type="term" value="F:RNA polymerase II cis-regulatory region sequence-specific DNA binding"/>
    <property type="evidence" value="ECO:0000318"/>
    <property type="project" value="GO_Central"/>
</dbReference>
<dbReference type="GO" id="GO:0001525">
    <property type="term" value="P:angiogenesis"/>
    <property type="evidence" value="ECO:0000270"/>
    <property type="project" value="UniProtKB"/>
</dbReference>
<dbReference type="GO" id="GO:0048645">
    <property type="term" value="P:animal organ formation"/>
    <property type="evidence" value="ECO:0007669"/>
    <property type="project" value="Ensembl"/>
</dbReference>
<dbReference type="GO" id="GO:0009952">
    <property type="term" value="P:anterior/posterior pattern specification"/>
    <property type="evidence" value="ECO:0000318"/>
    <property type="project" value="GO_Central"/>
</dbReference>
<dbReference type="GO" id="GO:0001974">
    <property type="term" value="P:blood vessel remodeling"/>
    <property type="evidence" value="ECO:0007669"/>
    <property type="project" value="Ensembl"/>
</dbReference>
<dbReference type="GO" id="GO:0051216">
    <property type="term" value="P:cartilage development"/>
    <property type="evidence" value="ECO:0007669"/>
    <property type="project" value="Ensembl"/>
</dbReference>
<dbReference type="GO" id="GO:0048704">
    <property type="term" value="P:embryonic skeletal system morphogenesis"/>
    <property type="evidence" value="ECO:0000318"/>
    <property type="project" value="GO_Central"/>
</dbReference>
<dbReference type="GO" id="GO:0010467">
    <property type="term" value="P:gene expression"/>
    <property type="evidence" value="ECO:0007669"/>
    <property type="project" value="Ensembl"/>
</dbReference>
<dbReference type="GO" id="GO:0021615">
    <property type="term" value="P:glossopharyngeal nerve morphogenesis"/>
    <property type="evidence" value="ECO:0007669"/>
    <property type="project" value="Ensembl"/>
</dbReference>
<dbReference type="GO" id="GO:0060017">
    <property type="term" value="P:parathyroid gland development"/>
    <property type="evidence" value="ECO:0007669"/>
    <property type="project" value="Ensembl"/>
</dbReference>
<dbReference type="GO" id="GO:2000648">
    <property type="term" value="P:positive regulation of stem cell proliferation"/>
    <property type="evidence" value="ECO:0007669"/>
    <property type="project" value="Ensembl"/>
</dbReference>
<dbReference type="GO" id="GO:0006357">
    <property type="term" value="P:regulation of transcription by RNA polymerase II"/>
    <property type="evidence" value="ECO:0000318"/>
    <property type="project" value="GO_Central"/>
</dbReference>
<dbReference type="GO" id="GO:0010159">
    <property type="term" value="P:specification of animal organ position"/>
    <property type="evidence" value="ECO:0007669"/>
    <property type="project" value="Ensembl"/>
</dbReference>
<dbReference type="GO" id="GO:0072089">
    <property type="term" value="P:stem cell proliferation"/>
    <property type="evidence" value="ECO:0007669"/>
    <property type="project" value="Ensembl"/>
</dbReference>
<dbReference type="GO" id="GO:0048538">
    <property type="term" value="P:thymus development"/>
    <property type="evidence" value="ECO:0007669"/>
    <property type="project" value="Ensembl"/>
</dbReference>
<dbReference type="GO" id="GO:0030878">
    <property type="term" value="P:thyroid gland development"/>
    <property type="evidence" value="ECO:0007669"/>
    <property type="project" value="Ensembl"/>
</dbReference>
<dbReference type="CDD" id="cd00086">
    <property type="entry name" value="homeodomain"/>
    <property type="match status" value="1"/>
</dbReference>
<dbReference type="FunFam" id="1.10.10.60:FF:000094">
    <property type="entry name" value="Homeobox protein Hox-A3"/>
    <property type="match status" value="1"/>
</dbReference>
<dbReference type="Gene3D" id="1.10.10.60">
    <property type="entry name" value="Homeodomain-like"/>
    <property type="match status" value="1"/>
</dbReference>
<dbReference type="InterPro" id="IPR025281">
    <property type="entry name" value="DUF4074"/>
</dbReference>
<dbReference type="InterPro" id="IPR001356">
    <property type="entry name" value="HD"/>
</dbReference>
<dbReference type="InterPro" id="IPR020479">
    <property type="entry name" value="HD_metazoa"/>
</dbReference>
<dbReference type="InterPro" id="IPR001827">
    <property type="entry name" value="Homeobox_Antennapedia_CS"/>
</dbReference>
<dbReference type="InterPro" id="IPR017970">
    <property type="entry name" value="Homeobox_CS"/>
</dbReference>
<dbReference type="InterPro" id="IPR009057">
    <property type="entry name" value="Homeodomain-like_sf"/>
</dbReference>
<dbReference type="PANTHER" id="PTHR45664:SF13">
    <property type="entry name" value="HOMEOBOX PROTEIN HOX-A3"/>
    <property type="match status" value="1"/>
</dbReference>
<dbReference type="PANTHER" id="PTHR45664">
    <property type="entry name" value="PROTEIN ZERKNUELLT 1-RELATED"/>
    <property type="match status" value="1"/>
</dbReference>
<dbReference type="Pfam" id="PF13293">
    <property type="entry name" value="DUF4074"/>
    <property type="match status" value="1"/>
</dbReference>
<dbReference type="Pfam" id="PF00046">
    <property type="entry name" value="Homeodomain"/>
    <property type="match status" value="1"/>
</dbReference>
<dbReference type="PRINTS" id="PR00024">
    <property type="entry name" value="HOMEOBOX"/>
</dbReference>
<dbReference type="PRINTS" id="PR01217">
    <property type="entry name" value="PRICHEXTENSN"/>
</dbReference>
<dbReference type="SMART" id="SM00389">
    <property type="entry name" value="HOX"/>
    <property type="match status" value="1"/>
</dbReference>
<dbReference type="SUPFAM" id="SSF46689">
    <property type="entry name" value="Homeodomain-like"/>
    <property type="match status" value="1"/>
</dbReference>
<dbReference type="PROSITE" id="PS00032">
    <property type="entry name" value="ANTENNAPEDIA"/>
    <property type="match status" value="1"/>
</dbReference>
<dbReference type="PROSITE" id="PS00027">
    <property type="entry name" value="HOMEOBOX_1"/>
    <property type="match status" value="1"/>
</dbReference>
<dbReference type="PROSITE" id="PS50071">
    <property type="entry name" value="HOMEOBOX_2"/>
    <property type="match status" value="1"/>
</dbReference>
<comment type="function">
    <text>Sequence-specific transcription factor which is part of a developmental regulatory system that provides cells with specific positional identities on the anterior-posterior axis.</text>
</comment>
<comment type="interaction">
    <interactant intactId="EBI-8643838">
        <id>O43365</id>
    </interactant>
    <interactant intactId="EBI-351829">
        <id>O15145</id>
        <label>ARPC3</label>
    </interactant>
    <organismsDiffer>false</organismsDiffer>
    <experiments>6</experiments>
</comment>
<comment type="interaction">
    <interactant intactId="EBI-8643838">
        <id>O43365</id>
    </interactant>
    <interactant intactId="EBI-12275524">
        <id>P23560-2</id>
        <label>BDNF</label>
    </interactant>
    <organismsDiffer>false</organismsDiffer>
    <experiments>3</experiments>
</comment>
<comment type="interaction">
    <interactant intactId="EBI-8643838">
        <id>O43365</id>
    </interactant>
    <interactant intactId="EBI-742673">
        <id>Q15437</id>
        <label>SEC23B</label>
    </interactant>
    <organismsDiffer>false</organismsDiffer>
    <experiments>4</experiments>
</comment>
<comment type="subcellular location">
    <subcellularLocation>
        <location>Nucleus</location>
    </subcellularLocation>
</comment>
<comment type="similarity">
    <text evidence="4">Belongs to the Antp homeobox family.</text>
</comment>
<keyword id="KW-0217">Developmental protein</keyword>
<keyword id="KW-0238">DNA-binding</keyword>
<keyword id="KW-0371">Homeobox</keyword>
<keyword id="KW-0539">Nucleus</keyword>
<keyword id="KW-1267">Proteomics identification</keyword>
<keyword id="KW-1185">Reference proteome</keyword>
<keyword id="KW-0804">Transcription</keyword>
<keyword id="KW-0805">Transcription regulation</keyword>
<protein>
    <recommendedName>
        <fullName>Homeobox protein Hox-A3</fullName>
    </recommendedName>
    <alternativeName>
        <fullName>Homeobox protein Hox-1E</fullName>
    </alternativeName>
</protein>
<reference key="1">
    <citation type="journal article" date="2003" name="Science">
        <title>Human chromosome 7: DNA sequence and biology.</title>
        <authorList>
            <person name="Scherer S.W."/>
            <person name="Cheung J."/>
            <person name="MacDonald J.R."/>
            <person name="Osborne L.R."/>
            <person name="Nakabayashi K."/>
            <person name="Herbrick J.-A."/>
            <person name="Carson A.R."/>
            <person name="Parker-Katiraee L."/>
            <person name="Skaug J."/>
            <person name="Khaja R."/>
            <person name="Zhang J."/>
            <person name="Hudek A.K."/>
            <person name="Li M."/>
            <person name="Haddad M."/>
            <person name="Duggan G.E."/>
            <person name="Fernandez B.A."/>
            <person name="Kanematsu E."/>
            <person name="Gentles S."/>
            <person name="Christopoulos C.C."/>
            <person name="Choufani S."/>
            <person name="Kwasnicka D."/>
            <person name="Zheng X.H."/>
            <person name="Lai Z."/>
            <person name="Nusskern D.R."/>
            <person name="Zhang Q."/>
            <person name="Gu Z."/>
            <person name="Lu F."/>
            <person name="Zeesman S."/>
            <person name="Nowaczyk M.J."/>
            <person name="Teshima I."/>
            <person name="Chitayat D."/>
            <person name="Shuman C."/>
            <person name="Weksberg R."/>
            <person name="Zackai E.H."/>
            <person name="Grebe T.A."/>
            <person name="Cox S.R."/>
            <person name="Kirkpatrick S.J."/>
            <person name="Rahman N."/>
            <person name="Friedman J.M."/>
            <person name="Heng H.H.Q."/>
            <person name="Pelicci P.G."/>
            <person name="Lo-Coco F."/>
            <person name="Belloni E."/>
            <person name="Shaffer L.G."/>
            <person name="Pober B."/>
            <person name="Morton C.C."/>
            <person name="Gusella J.F."/>
            <person name="Bruns G.A.P."/>
            <person name="Korf B.R."/>
            <person name="Quade B.J."/>
            <person name="Ligon A.H."/>
            <person name="Ferguson H."/>
            <person name="Higgins A.W."/>
            <person name="Leach N.T."/>
            <person name="Herrick S.R."/>
            <person name="Lemyre E."/>
            <person name="Farra C.G."/>
            <person name="Kim H.-G."/>
            <person name="Summers A.M."/>
            <person name="Gripp K.W."/>
            <person name="Roberts W."/>
            <person name="Szatmari P."/>
            <person name="Winsor E.J.T."/>
            <person name="Grzeschik K.-H."/>
            <person name="Teebi A."/>
            <person name="Minassian B.A."/>
            <person name="Kere J."/>
            <person name="Armengol L."/>
            <person name="Pujana M.A."/>
            <person name="Estivill X."/>
            <person name="Wilson M.D."/>
            <person name="Koop B.F."/>
            <person name="Tosi S."/>
            <person name="Moore G.E."/>
            <person name="Boright A.P."/>
            <person name="Zlotorynski E."/>
            <person name="Kerem B."/>
            <person name="Kroisel P.M."/>
            <person name="Petek E."/>
            <person name="Oscier D.G."/>
            <person name="Mould S.J."/>
            <person name="Doehner H."/>
            <person name="Doehner K."/>
            <person name="Rommens J.M."/>
            <person name="Vincent J.B."/>
            <person name="Venter J.C."/>
            <person name="Li P.W."/>
            <person name="Mural R.J."/>
            <person name="Adams M.D."/>
            <person name="Tsui L.-C."/>
        </authorList>
    </citation>
    <scope>NUCLEOTIDE SEQUENCE [LARGE SCALE GENOMIC DNA]</scope>
</reference>
<reference key="2">
    <citation type="submission" date="2005-07" db="EMBL/GenBank/DDBJ databases">
        <authorList>
            <person name="Mural R.J."/>
            <person name="Istrail S."/>
            <person name="Sutton G.G."/>
            <person name="Florea L."/>
            <person name="Halpern A.L."/>
            <person name="Mobarry C.M."/>
            <person name="Lippert R."/>
            <person name="Walenz B."/>
            <person name="Shatkay H."/>
            <person name="Dew I."/>
            <person name="Miller J.R."/>
            <person name="Flanigan M.J."/>
            <person name="Edwards N.J."/>
            <person name="Bolanos R."/>
            <person name="Fasulo D."/>
            <person name="Halldorsson B.V."/>
            <person name="Hannenhalli S."/>
            <person name="Turner R."/>
            <person name="Yooseph S."/>
            <person name="Lu F."/>
            <person name="Nusskern D.R."/>
            <person name="Shue B.C."/>
            <person name="Zheng X.H."/>
            <person name="Zhong F."/>
            <person name="Delcher A.L."/>
            <person name="Huson D.H."/>
            <person name="Kravitz S.A."/>
            <person name="Mouchard L."/>
            <person name="Reinert K."/>
            <person name="Remington K.A."/>
            <person name="Clark A.G."/>
            <person name="Waterman M.S."/>
            <person name="Eichler E.E."/>
            <person name="Adams M.D."/>
            <person name="Hunkapiller M.W."/>
            <person name="Myers E.W."/>
            <person name="Venter J.C."/>
        </authorList>
    </citation>
    <scope>NUCLEOTIDE SEQUENCE [LARGE SCALE GENOMIC DNA]</scope>
</reference>
<reference key="3">
    <citation type="journal article" date="2003" name="Nature">
        <title>The DNA sequence of human chromosome 7.</title>
        <authorList>
            <person name="Hillier L.W."/>
            <person name="Fulton R.S."/>
            <person name="Fulton L.A."/>
            <person name="Graves T.A."/>
            <person name="Pepin K.H."/>
            <person name="Wagner-McPherson C."/>
            <person name="Layman D."/>
            <person name="Maas J."/>
            <person name="Jaeger S."/>
            <person name="Walker R."/>
            <person name="Wylie K."/>
            <person name="Sekhon M."/>
            <person name="Becker M.C."/>
            <person name="O'Laughlin M.D."/>
            <person name="Schaller M.E."/>
            <person name="Fewell G.A."/>
            <person name="Delehaunty K.D."/>
            <person name="Miner T.L."/>
            <person name="Nash W.E."/>
            <person name="Cordes M."/>
            <person name="Du H."/>
            <person name="Sun H."/>
            <person name="Edwards J."/>
            <person name="Bradshaw-Cordum H."/>
            <person name="Ali J."/>
            <person name="Andrews S."/>
            <person name="Isak A."/>
            <person name="Vanbrunt A."/>
            <person name="Nguyen C."/>
            <person name="Du F."/>
            <person name="Lamar B."/>
            <person name="Courtney L."/>
            <person name="Kalicki J."/>
            <person name="Ozersky P."/>
            <person name="Bielicki L."/>
            <person name="Scott K."/>
            <person name="Holmes A."/>
            <person name="Harkins R."/>
            <person name="Harris A."/>
            <person name="Strong C.M."/>
            <person name="Hou S."/>
            <person name="Tomlinson C."/>
            <person name="Dauphin-Kohlberg S."/>
            <person name="Kozlowicz-Reilly A."/>
            <person name="Leonard S."/>
            <person name="Rohlfing T."/>
            <person name="Rock S.M."/>
            <person name="Tin-Wollam A.-M."/>
            <person name="Abbott A."/>
            <person name="Minx P."/>
            <person name="Maupin R."/>
            <person name="Strowmatt C."/>
            <person name="Latreille P."/>
            <person name="Miller N."/>
            <person name="Johnson D."/>
            <person name="Murray J."/>
            <person name="Woessner J.P."/>
            <person name="Wendl M.C."/>
            <person name="Yang S.-P."/>
            <person name="Schultz B.R."/>
            <person name="Wallis J.W."/>
            <person name="Spieth J."/>
            <person name="Bieri T.A."/>
            <person name="Nelson J.O."/>
            <person name="Berkowicz N."/>
            <person name="Wohldmann P.E."/>
            <person name="Cook L.L."/>
            <person name="Hickenbotham M.T."/>
            <person name="Eldred J."/>
            <person name="Williams D."/>
            <person name="Bedell J.A."/>
            <person name="Mardis E.R."/>
            <person name="Clifton S.W."/>
            <person name="Chissoe S.L."/>
            <person name="Marra M.A."/>
            <person name="Raymond C."/>
            <person name="Haugen E."/>
            <person name="Gillett W."/>
            <person name="Zhou Y."/>
            <person name="James R."/>
            <person name="Phelps K."/>
            <person name="Iadanoto S."/>
            <person name="Bubb K."/>
            <person name="Simms E."/>
            <person name="Levy R."/>
            <person name="Clendenning J."/>
            <person name="Kaul R."/>
            <person name="Kent W.J."/>
            <person name="Furey T.S."/>
            <person name="Baertsch R.A."/>
            <person name="Brent M.R."/>
            <person name="Keibler E."/>
            <person name="Flicek P."/>
            <person name="Bork P."/>
            <person name="Suyama M."/>
            <person name="Bailey J.A."/>
            <person name="Portnoy M.E."/>
            <person name="Torrents D."/>
            <person name="Chinwalla A.T."/>
            <person name="Gish W.R."/>
            <person name="Eddy S.R."/>
            <person name="McPherson J.D."/>
            <person name="Olson M.V."/>
            <person name="Eichler E.E."/>
            <person name="Green E.D."/>
            <person name="Waterston R.H."/>
            <person name="Wilson R.K."/>
        </authorList>
    </citation>
    <scope>NUCLEOTIDE SEQUENCE [LARGE SCALE GENOMIC DNA]</scope>
</reference>
<reference key="4">
    <citation type="journal article" date="2004" name="Genome Res.">
        <title>The status, quality, and expansion of the NIH full-length cDNA project: the Mammalian Gene Collection (MGC).</title>
        <authorList>
            <consortium name="The MGC Project Team"/>
        </authorList>
    </citation>
    <scope>NUCLEOTIDE SEQUENCE [LARGE SCALE MRNA]</scope>
    <source>
        <tissue>Uterus</tissue>
    </source>
</reference>
<reference key="5">
    <citation type="journal article" date="2006" name="Science">
        <title>The consensus coding sequences of human breast and colorectal cancers.</title>
        <authorList>
            <person name="Sjoeblom T."/>
            <person name="Jones S."/>
            <person name="Wood L.D."/>
            <person name="Parsons D.W."/>
            <person name="Lin J."/>
            <person name="Barber T.D."/>
            <person name="Mandelker D."/>
            <person name="Leary R.J."/>
            <person name="Ptak J."/>
            <person name="Silliman N."/>
            <person name="Szabo S."/>
            <person name="Buckhaults P."/>
            <person name="Farrell C."/>
            <person name="Meeh P."/>
            <person name="Markowitz S.D."/>
            <person name="Willis J."/>
            <person name="Dawson D."/>
            <person name="Willson J.K.V."/>
            <person name="Gazdar A.F."/>
            <person name="Hartigan J."/>
            <person name="Wu L."/>
            <person name="Liu C."/>
            <person name="Parmigiani G."/>
            <person name="Park B.H."/>
            <person name="Bachman K.E."/>
            <person name="Papadopoulos N."/>
            <person name="Vogelstein B."/>
            <person name="Kinzler K.W."/>
            <person name="Velculescu V.E."/>
        </authorList>
    </citation>
    <scope>VARIANTS [LARGE SCALE ANALYSIS] ASN-42 AND THR-131</scope>
</reference>
<proteinExistence type="evidence at protein level"/>
<sequence>MQKATYYDSSAIYGGYPYQAANGFAYNANQQPYPASAALGADGEYHRPACSLQSPSSAGGHPKAHELSEACLRTLSAPPSQPPSLGEPPLHPPPPQAAPPAPQPPQPAPQPPAPTPAAPPPPSSASPPQNASNNPTPANAAKSPLLNSPTVAKQIFPWMKESRQNTKQKTSSSSSGESCAGDKSPPGQASSKRARTAYTSAQLVELEKEFHFNRYLCRPRRVEMANLLNLTERQIKIWFQNRRMKYKKDQKGKGMLTSSGGQSPSRSPVPPGAGGYLNSMHSLVNSVPYEPQSPPPFSKPPQGTYGLPPASYPASLPSCAPPPPPQKRYTAAGAGAGGTPDYDPHAHGLQGNGSYGTPHIQGSPVFVGGSYVEPMSNSGPALFGLTHLPHAASGAMDYGGAGPLGSGHHHGPGPGEPHPTYTDLTGHHPSQGRIQEAPKLTHL</sequence>
<name>HXA3_HUMAN</name>